<proteinExistence type="inferred from homology"/>
<comment type="function">
    <text evidence="1">Protein S19 forms a complex with S13 that binds strongly to the 16S ribosomal RNA.</text>
</comment>
<comment type="similarity">
    <text evidence="1">Belongs to the universal ribosomal protein uS19 family.</text>
</comment>
<comment type="sequence caution" evidence="2">
    <conflict type="erroneous initiation">
        <sequence resource="EMBL-CDS" id="AAO44647"/>
    </conflict>
</comment>
<name>RS19_TROWT</name>
<organism>
    <name type="scientific">Tropheryma whipplei (strain Twist)</name>
    <name type="common">Whipple's bacillus</name>
    <dbReference type="NCBI Taxonomy" id="203267"/>
    <lineage>
        <taxon>Bacteria</taxon>
        <taxon>Bacillati</taxon>
        <taxon>Actinomycetota</taxon>
        <taxon>Actinomycetes</taxon>
        <taxon>Micrococcales</taxon>
        <taxon>Tropherymataceae</taxon>
        <taxon>Tropheryma</taxon>
    </lineage>
</organism>
<evidence type="ECO:0000255" key="1">
    <source>
        <dbReference type="HAMAP-Rule" id="MF_00531"/>
    </source>
</evidence>
<evidence type="ECO:0000305" key="2"/>
<keyword id="KW-1185">Reference proteome</keyword>
<keyword id="KW-0687">Ribonucleoprotein</keyword>
<keyword id="KW-0689">Ribosomal protein</keyword>
<keyword id="KW-0694">RNA-binding</keyword>
<keyword id="KW-0699">rRNA-binding</keyword>
<dbReference type="EMBL" id="AE014184">
    <property type="protein sequence ID" value="AAO44647.1"/>
    <property type="status" value="ALT_INIT"/>
    <property type="molecule type" value="Genomic_DNA"/>
</dbReference>
<dbReference type="RefSeq" id="WP_011096169.1">
    <property type="nucleotide sequence ID" value="NC_004572.3"/>
</dbReference>
<dbReference type="SMR" id="Q83FZ0"/>
<dbReference type="STRING" id="203267.TWT_550"/>
<dbReference type="GeneID" id="67387987"/>
<dbReference type="KEGG" id="twh:TWT_550"/>
<dbReference type="eggNOG" id="COG0185">
    <property type="taxonomic scope" value="Bacteria"/>
</dbReference>
<dbReference type="HOGENOM" id="CLU_150100_0_0_11"/>
<dbReference type="OrthoDB" id="9797833at2"/>
<dbReference type="Proteomes" id="UP000002200">
    <property type="component" value="Chromosome"/>
</dbReference>
<dbReference type="GO" id="GO:0005737">
    <property type="term" value="C:cytoplasm"/>
    <property type="evidence" value="ECO:0007669"/>
    <property type="project" value="UniProtKB-ARBA"/>
</dbReference>
<dbReference type="GO" id="GO:0015935">
    <property type="term" value="C:small ribosomal subunit"/>
    <property type="evidence" value="ECO:0007669"/>
    <property type="project" value="InterPro"/>
</dbReference>
<dbReference type="GO" id="GO:0019843">
    <property type="term" value="F:rRNA binding"/>
    <property type="evidence" value="ECO:0007669"/>
    <property type="project" value="UniProtKB-UniRule"/>
</dbReference>
<dbReference type="GO" id="GO:0003735">
    <property type="term" value="F:structural constituent of ribosome"/>
    <property type="evidence" value="ECO:0007669"/>
    <property type="project" value="InterPro"/>
</dbReference>
<dbReference type="GO" id="GO:0000028">
    <property type="term" value="P:ribosomal small subunit assembly"/>
    <property type="evidence" value="ECO:0007669"/>
    <property type="project" value="TreeGrafter"/>
</dbReference>
<dbReference type="GO" id="GO:0006412">
    <property type="term" value="P:translation"/>
    <property type="evidence" value="ECO:0007669"/>
    <property type="project" value="UniProtKB-UniRule"/>
</dbReference>
<dbReference type="FunFam" id="3.30.860.10:FF:000001">
    <property type="entry name" value="30S ribosomal protein S19"/>
    <property type="match status" value="1"/>
</dbReference>
<dbReference type="Gene3D" id="3.30.860.10">
    <property type="entry name" value="30s Ribosomal Protein S19, Chain A"/>
    <property type="match status" value="1"/>
</dbReference>
<dbReference type="HAMAP" id="MF_00531">
    <property type="entry name" value="Ribosomal_uS19"/>
    <property type="match status" value="1"/>
</dbReference>
<dbReference type="InterPro" id="IPR002222">
    <property type="entry name" value="Ribosomal_uS19"/>
</dbReference>
<dbReference type="InterPro" id="IPR005732">
    <property type="entry name" value="Ribosomal_uS19_bac-type"/>
</dbReference>
<dbReference type="InterPro" id="IPR020934">
    <property type="entry name" value="Ribosomal_uS19_CS"/>
</dbReference>
<dbReference type="InterPro" id="IPR023575">
    <property type="entry name" value="Ribosomal_uS19_SF"/>
</dbReference>
<dbReference type="NCBIfam" id="TIGR01050">
    <property type="entry name" value="rpsS_bact"/>
    <property type="match status" value="1"/>
</dbReference>
<dbReference type="PANTHER" id="PTHR11880">
    <property type="entry name" value="RIBOSOMAL PROTEIN S19P FAMILY MEMBER"/>
    <property type="match status" value="1"/>
</dbReference>
<dbReference type="PANTHER" id="PTHR11880:SF8">
    <property type="entry name" value="SMALL RIBOSOMAL SUBUNIT PROTEIN US19M"/>
    <property type="match status" value="1"/>
</dbReference>
<dbReference type="Pfam" id="PF00203">
    <property type="entry name" value="Ribosomal_S19"/>
    <property type="match status" value="1"/>
</dbReference>
<dbReference type="PIRSF" id="PIRSF002144">
    <property type="entry name" value="Ribosomal_S19"/>
    <property type="match status" value="1"/>
</dbReference>
<dbReference type="PRINTS" id="PR00975">
    <property type="entry name" value="RIBOSOMALS19"/>
</dbReference>
<dbReference type="SUPFAM" id="SSF54570">
    <property type="entry name" value="Ribosomal protein S19"/>
    <property type="match status" value="1"/>
</dbReference>
<dbReference type="PROSITE" id="PS00323">
    <property type="entry name" value="RIBOSOMAL_S19"/>
    <property type="match status" value="1"/>
</dbReference>
<reference key="1">
    <citation type="journal article" date="2003" name="Genome Res.">
        <title>Tropheryma whipplei twist: a human pathogenic Actinobacteria with a reduced genome.</title>
        <authorList>
            <person name="Raoult D."/>
            <person name="Ogata H."/>
            <person name="Audic S."/>
            <person name="Robert C."/>
            <person name="Suhre K."/>
            <person name="Drancourt M."/>
            <person name="Claverie J.-M."/>
        </authorList>
    </citation>
    <scope>NUCLEOTIDE SEQUENCE [LARGE SCALE GENOMIC DNA]</scope>
    <source>
        <strain>Twist</strain>
    </source>
</reference>
<feature type="chain" id="PRO_0000129934" description="Small ribosomal subunit protein uS19">
    <location>
        <begin position="1"/>
        <end position="93"/>
    </location>
</feature>
<sequence length="93" mass="10873">MPRSLKKGPFVDMHLLKKVRAGNESKDRNMIKTWSRRSMIIPEMLGHTIAVHDGRRHIPVFITESMVGHKLGEFAPTRTYRGHVKDDRKARRR</sequence>
<protein>
    <recommendedName>
        <fullName evidence="1">Small ribosomal subunit protein uS19</fullName>
    </recommendedName>
    <alternativeName>
        <fullName evidence="2">30S ribosomal protein S19</fullName>
    </alternativeName>
</protein>
<gene>
    <name evidence="1" type="primary">rpsS</name>
    <name type="ordered locus">TWT_550</name>
</gene>
<accession>Q83FZ0</accession>